<evidence type="ECO:0000255" key="1"/>
<evidence type="ECO:0000256" key="2">
    <source>
        <dbReference type="SAM" id="MobiDB-lite"/>
    </source>
</evidence>
<evidence type="ECO:0000269" key="3">
    <source>
    </source>
</evidence>
<evidence type="ECO:0000269" key="4">
    <source>
    </source>
</evidence>
<evidence type="ECO:0000269" key="5">
    <source>
    </source>
</evidence>
<evidence type="ECO:0000269" key="6">
    <source>
    </source>
</evidence>
<evidence type="ECO:0000269" key="7">
    <source>
    </source>
</evidence>
<evidence type="ECO:0000269" key="8">
    <source>
    </source>
</evidence>
<evidence type="ECO:0000303" key="9">
    <source>
    </source>
</evidence>
<evidence type="ECO:0000303" key="10">
    <source>
    </source>
</evidence>
<evidence type="ECO:0000305" key="11"/>
<evidence type="ECO:0007829" key="12">
    <source>
        <dbReference type="PDB" id="3WUZ"/>
    </source>
</evidence>
<evidence type="ECO:0007829" key="13">
    <source>
        <dbReference type="PDB" id="5XO2"/>
    </source>
</evidence>
<proteinExistence type="evidence at protein level"/>
<feature type="signal peptide" evidence="1">
    <location>
        <begin position="1"/>
        <end position="19"/>
    </location>
</feature>
<feature type="chain" id="PRO_0000226821" description="Paired immunoglobulin-like type 2 receptor alpha">
    <location>
        <begin position="20"/>
        <end position="303"/>
    </location>
</feature>
<feature type="topological domain" description="Extracellular" evidence="1">
    <location>
        <begin position="20"/>
        <end position="197"/>
    </location>
</feature>
<feature type="transmembrane region" description="Helical" evidence="1">
    <location>
        <begin position="198"/>
        <end position="218"/>
    </location>
</feature>
<feature type="topological domain" description="Cytoplasmic" evidence="1">
    <location>
        <begin position="219"/>
        <end position="303"/>
    </location>
</feature>
<feature type="domain" description="Ig-like V-type">
    <location>
        <begin position="32"/>
        <end position="150"/>
    </location>
</feature>
<feature type="region of interest" description="Disordered" evidence="2">
    <location>
        <begin position="226"/>
        <end position="296"/>
    </location>
</feature>
<feature type="short sequence motif" description="ITIM motif 1">
    <location>
        <begin position="267"/>
        <end position="272"/>
    </location>
</feature>
<feature type="short sequence motif" description="ITIM motif 2">
    <location>
        <begin position="296"/>
        <end position="301"/>
    </location>
</feature>
<feature type="glycosylation site" description="N-linked (GlcNAc...) asparagine" evidence="7">
    <location>
        <position position="100"/>
    </location>
</feature>
<feature type="splice variant" id="VSP_017500" description="In isoform 4." evidence="9">
    <original>AVTTTTQRPSSMTTTWRLSSTTTTTGLRVTQGKRRSDSWHISLETAVGVAVAVTVLGIMILGLICLLRWRRRKGQQRTKATTPAREPFQNTEEPYENIRNEGQNTDPKLNPKDDGIVYASLALSSSTSPRAPPSHRPLKSPQNETLYSVLKA</original>
    <variation>GNPSKTQRSHMRISGMKDKIQIPS</variation>
    <location>
        <begin position="152"/>
        <end position="303"/>
    </location>
</feature>
<feature type="splice variant" id="VSP_017501" description="In isoform 3." evidence="9">
    <location>
        <begin position="152"/>
        <end position="224"/>
    </location>
</feature>
<feature type="splice variant" id="VSP_017502" description="In isoform 2." evidence="10">
    <original>DDGIVYASLALSSSTSPRAPPSHRPLKSPQNETLYSVLKA</original>
    <variation>LHLTQSTSQPPSPQEPPERDPVLCLKGLTNGQPSQD</variation>
    <location>
        <begin position="264"/>
        <end position="303"/>
    </location>
</feature>
<feature type="sequence variant" id="VAR_060361" description="In dbSNP:rs1859788." evidence="3 4 5">
    <original>R</original>
    <variation>G</variation>
    <location>
        <position position="78"/>
    </location>
</feature>
<feature type="sequence variant" id="VAR_056062" description="In dbSNP:rs34266222.">
    <original>S</original>
    <variation>L</variation>
    <location>
        <position position="279"/>
    </location>
</feature>
<feature type="mutagenesis site" description="Greatly diminishes interaction with PTPN6." evidence="3">
    <original>Y</original>
    <variation>F</variation>
    <location>
        <position position="269"/>
    </location>
</feature>
<feature type="sequence conflict" description="In Ref. 2; CAC01615." evidence="11" ref="2">
    <original>D</original>
    <variation>E</variation>
    <location>
        <position position="92"/>
    </location>
</feature>
<feature type="sequence conflict" description="In Ref. 1; AAD52964." evidence="11" ref="1">
    <original>R</original>
    <variation>K</variation>
    <location>
        <position position="281"/>
    </location>
</feature>
<feature type="strand" evidence="12">
    <location>
        <begin position="34"/>
        <end position="36"/>
    </location>
</feature>
<feature type="strand" evidence="12">
    <location>
        <begin position="39"/>
        <end position="44"/>
    </location>
</feature>
<feature type="strand" evidence="12">
    <location>
        <begin position="49"/>
        <end position="56"/>
    </location>
</feature>
<feature type="strand" evidence="12">
    <location>
        <begin position="68"/>
        <end position="77"/>
    </location>
</feature>
<feature type="strand" evidence="12">
    <location>
        <begin position="79"/>
        <end position="83"/>
    </location>
</feature>
<feature type="turn" evidence="12">
    <location>
        <begin position="84"/>
        <end position="87"/>
    </location>
</feature>
<feature type="helix" evidence="12">
    <location>
        <begin position="91"/>
        <end position="93"/>
    </location>
</feature>
<feature type="turn" evidence="13">
    <location>
        <begin position="94"/>
        <end position="96"/>
    </location>
</feature>
<feature type="strand" evidence="12">
    <location>
        <begin position="97"/>
        <end position="100"/>
    </location>
</feature>
<feature type="strand" evidence="12">
    <location>
        <begin position="106"/>
        <end position="112"/>
    </location>
</feature>
<feature type="helix" evidence="12">
    <location>
        <begin position="117"/>
        <end position="119"/>
    </location>
</feature>
<feature type="strand" evidence="12">
    <location>
        <begin position="121"/>
        <end position="131"/>
    </location>
</feature>
<feature type="turn" evidence="12">
    <location>
        <begin position="132"/>
        <end position="134"/>
    </location>
</feature>
<feature type="strand" evidence="12">
    <location>
        <begin position="135"/>
        <end position="140"/>
    </location>
</feature>
<feature type="strand" evidence="12">
    <location>
        <begin position="145"/>
        <end position="150"/>
    </location>
</feature>
<feature type="sequence conflict" description="In Ref. 2; CAC01615." evidence="11" ref="2">
    <original>K</original>
    <variation>R</variation>
    <location sequence="Q9UKJ1-4">
        <position position="168"/>
    </location>
</feature>
<accession>Q9UKJ1</accession>
<accession>Q8NHI1</accession>
<comment type="function">
    <text evidence="4 8">Paired receptors consist of highly related activating and inhibitory receptors and are widely involved in the regulation of the immune system. PILRA is thought to act as a cellular signaling inhibitory receptor by recruiting cytoplasmic phosphatases like PTPN6/SHP-1 and PTPN11/SHP-2 via their SH2 domains that block signal transduction through dephosphorylation of signaling molecules. Receptor for PIANP.</text>
</comment>
<comment type="function">
    <text evidence="6">(Microbial infection) Acts as an entry co-receptor for herpes simplex virus 1.</text>
</comment>
<comment type="subunit">
    <text evidence="3 4">Monomer. Interacts with PTPN6/SHP-1 and PTPN11/SHP-2 upon tyrosine phosphorylation.</text>
</comment>
<comment type="subunit">
    <text evidence="6">(Microbial infection) Interacts with herpes simplex virus 1 glycoprotein B.</text>
</comment>
<comment type="interaction">
    <interactant intactId="EBI-965833">
        <id>Q9UKJ1</id>
    </interactant>
    <interactant intactId="EBI-1104680">
        <id>Q5KU26</id>
        <label>COLEC12</label>
    </interactant>
    <organismsDiffer>false</organismsDiffer>
    <experiments>2</experiments>
</comment>
<comment type="interaction">
    <interactant intactId="EBI-965833">
        <id>Q9UKJ1</id>
    </interactant>
    <interactant intactId="EBI-748927">
        <id>Q9NQX5</id>
        <label>NPDC1</label>
    </interactant>
    <organismsDiffer>false</organismsDiffer>
    <experiments>6</experiments>
</comment>
<comment type="interaction">
    <interactant intactId="EBI-965833">
        <id>Q9UKJ1</id>
    </interactant>
    <interactant intactId="EBI-78260">
        <id>P29350</id>
        <label>PTPN6</label>
    </interactant>
    <organismsDiffer>false</organismsDiffer>
    <experiments>5</experiments>
</comment>
<comment type="interaction">
    <interactant intactId="EBI-965833">
        <id>Q9UKJ1</id>
    </interactant>
    <interactant intactId="EBI-1771271">
        <id>P06436</id>
        <label>gB</label>
    </interactant>
    <organismsDiffer>true</organismsDiffer>
    <experiments>3</experiments>
</comment>
<comment type="subcellular location">
    <molecule>Isoform 1</molecule>
    <subcellularLocation>
        <location evidence="11">Cell membrane</location>
        <topology evidence="11">Single-pass type I membrane protein</topology>
    </subcellularLocation>
</comment>
<comment type="subcellular location">
    <molecule>Isoform 2</molecule>
    <subcellularLocation>
        <location evidence="11">Cell membrane</location>
        <topology evidence="11">Single-pass type I membrane protein</topology>
    </subcellularLocation>
</comment>
<comment type="subcellular location">
    <molecule>Isoform 3</molecule>
    <subcellularLocation>
        <location evidence="11">Secreted</location>
    </subcellularLocation>
</comment>
<comment type="subcellular location">
    <molecule>Isoform 4</molecule>
    <subcellularLocation>
        <location evidence="11">Secreted</location>
    </subcellularLocation>
</comment>
<comment type="alternative products">
    <event type="alternative splicing"/>
    <isoform>
        <id>Q9UKJ1-1</id>
        <name>1</name>
        <sequence type="displayed"/>
    </isoform>
    <isoform>
        <id>Q9UKJ1-2</id>
        <name>2</name>
        <sequence type="described" ref="VSP_017502"/>
    </isoform>
    <isoform>
        <id>Q9UKJ1-3</id>
        <name>3</name>
        <name>FDF03-deltaTM</name>
        <sequence type="described" ref="VSP_017501"/>
    </isoform>
    <isoform>
        <id>Q9UKJ1-4</id>
        <name>4</name>
        <name>FDF03-M14</name>
        <sequence type="described" ref="VSP_017500"/>
    </isoform>
</comment>
<comment type="tissue specificity">
    <text evidence="4">Predominantly detected in hemopoietic tissues and is expressed by monocytes, macrophages, and granulocytes, but not by lymphocytes. Also strongly expressed by dendritic cells (DC); preferentially by CD14+/CD1a- DC derived from CD34+ progenitors. Also expressed by CD11c+ blood and tonsil DC, but not by CD11c- DC precursors.</text>
</comment>
<comment type="domain">
    <text>Contains 2 copies of a cytoplasmic motif that is referred to as the immunoreceptor tyrosine-based inhibitor motif (ITIM). This motif is involved in modulation of cellular responses. The phosphorylated ITIM motif can bind the SH2 domain of several SH2-containing phosphatases. PTPN6 seems to bind predominantly to the first ITIM motif.</text>
</comment>
<comment type="PTM">
    <text evidence="3 4 7">According to PubMed:10660620, N- and O-glycosylated. According to PubMed:10903717, only N-glycosylated.</text>
</comment>
<comment type="PTM">
    <text evidence="3 4">Phosphorylated on tyrosine residues.</text>
</comment>
<gene>
    <name type="primary">PILRA</name>
</gene>
<protein>
    <recommendedName>
        <fullName>Paired immunoglobulin-like type 2 receptor alpha</fullName>
    </recommendedName>
    <alternativeName>
        <fullName>Cell surface receptor FDF03</fullName>
    </alternativeName>
    <alternativeName>
        <fullName>Inhibitory receptor PILR-alpha</fullName>
    </alternativeName>
</protein>
<organism>
    <name type="scientific">Homo sapiens</name>
    <name type="common">Human</name>
    <dbReference type="NCBI Taxonomy" id="9606"/>
    <lineage>
        <taxon>Eukaryota</taxon>
        <taxon>Metazoa</taxon>
        <taxon>Chordata</taxon>
        <taxon>Craniata</taxon>
        <taxon>Vertebrata</taxon>
        <taxon>Euteleostomi</taxon>
        <taxon>Mammalia</taxon>
        <taxon>Eutheria</taxon>
        <taxon>Euarchontoglires</taxon>
        <taxon>Primates</taxon>
        <taxon>Haplorrhini</taxon>
        <taxon>Catarrhini</taxon>
        <taxon>Hominidae</taxon>
        <taxon>Homo</taxon>
    </lineage>
</organism>
<dbReference type="EMBL" id="AF161080">
    <property type="protein sequence ID" value="AAD52964.1"/>
    <property type="molecule type" value="mRNA"/>
</dbReference>
<dbReference type="EMBL" id="AJ400841">
    <property type="protein sequence ID" value="CAC01613.1"/>
    <property type="molecule type" value="mRNA"/>
</dbReference>
<dbReference type="EMBL" id="AJ400842">
    <property type="protein sequence ID" value="CAC01614.1"/>
    <property type="molecule type" value="mRNA"/>
</dbReference>
<dbReference type="EMBL" id="AJ400843">
    <property type="protein sequence ID" value="CAC01615.1"/>
    <property type="molecule type" value="mRNA"/>
</dbReference>
<dbReference type="EMBL" id="AC005071">
    <property type="status" value="NOT_ANNOTATED_CDS"/>
    <property type="molecule type" value="Genomic_DNA"/>
</dbReference>
<dbReference type="EMBL" id="BC017812">
    <property type="protein sequence ID" value="AAH17812.1"/>
    <property type="molecule type" value="mRNA"/>
</dbReference>
<dbReference type="CCDS" id="CCDS47660.1">
    <molecule id="Q9UKJ1-4"/>
</dbReference>
<dbReference type="CCDS" id="CCDS5691.1">
    <molecule id="Q9UKJ1-1"/>
</dbReference>
<dbReference type="CCDS" id="CCDS5692.1">
    <molecule id="Q9UKJ1-3"/>
</dbReference>
<dbReference type="RefSeq" id="NP_038467.2">
    <molecule id="Q9UKJ1-1"/>
    <property type="nucleotide sequence ID" value="NM_013439.2"/>
</dbReference>
<dbReference type="RefSeq" id="NP_840056.1">
    <molecule id="Q9UKJ1-3"/>
    <property type="nucleotide sequence ID" value="NM_178272.2"/>
</dbReference>
<dbReference type="RefSeq" id="NP_840057.1">
    <molecule id="Q9UKJ1-4"/>
    <property type="nucleotide sequence ID" value="NM_178273.2"/>
</dbReference>
<dbReference type="RefSeq" id="XP_047276247.1">
    <molecule id="Q9UKJ1-1"/>
    <property type="nucleotide sequence ID" value="XM_047420291.1"/>
</dbReference>
<dbReference type="RefSeq" id="XP_047276248.1">
    <molecule id="Q9UKJ1-1"/>
    <property type="nucleotide sequence ID" value="XM_047420292.1"/>
</dbReference>
<dbReference type="PDB" id="3WUZ">
    <property type="method" value="X-ray"/>
    <property type="resolution" value="1.30 A"/>
    <property type="chains" value="A=32-150"/>
</dbReference>
<dbReference type="PDB" id="3WV0">
    <property type="method" value="X-ray"/>
    <property type="resolution" value="2.30 A"/>
    <property type="chains" value="A/B=32-150"/>
</dbReference>
<dbReference type="PDB" id="4NFB">
    <property type="method" value="X-ray"/>
    <property type="resolution" value="1.60 A"/>
    <property type="chains" value="A=32-150"/>
</dbReference>
<dbReference type="PDB" id="5XO2">
    <property type="method" value="X-ray"/>
    <property type="resolution" value="2.20 A"/>
    <property type="chains" value="A/B=32-150"/>
</dbReference>
<dbReference type="PDB" id="5XOF">
    <property type="method" value="X-ray"/>
    <property type="resolution" value="1.96 A"/>
    <property type="chains" value="A/B/C/D=32-150"/>
</dbReference>
<dbReference type="PDBsum" id="3WUZ"/>
<dbReference type="PDBsum" id="3WV0"/>
<dbReference type="PDBsum" id="4NFB"/>
<dbReference type="PDBsum" id="5XO2"/>
<dbReference type="PDBsum" id="5XOF"/>
<dbReference type="SMR" id="Q9UKJ1"/>
<dbReference type="BioGRID" id="119017">
    <property type="interactions" value="25"/>
</dbReference>
<dbReference type="FunCoup" id="Q9UKJ1">
    <property type="interactions" value="396"/>
</dbReference>
<dbReference type="IntAct" id="Q9UKJ1">
    <property type="interactions" value="23"/>
</dbReference>
<dbReference type="STRING" id="9606.ENSP00000198536"/>
<dbReference type="UniLectin" id="Q9UKJ1"/>
<dbReference type="GlyCosmos" id="Q9UKJ1">
    <property type="glycosylation" value="2 sites, 1 glycan"/>
</dbReference>
<dbReference type="GlyGen" id="Q9UKJ1">
    <property type="glycosylation" value="2 sites, 6 N-linked glycans (1 site), 1 O-linked glycan (1 site)"/>
</dbReference>
<dbReference type="iPTMnet" id="Q9UKJ1"/>
<dbReference type="PhosphoSitePlus" id="Q9UKJ1"/>
<dbReference type="BioMuta" id="PILRA"/>
<dbReference type="DMDM" id="296439272"/>
<dbReference type="MassIVE" id="Q9UKJ1"/>
<dbReference type="PaxDb" id="9606-ENSP00000198536"/>
<dbReference type="PeptideAtlas" id="Q9UKJ1"/>
<dbReference type="ProteomicsDB" id="84802">
    <molecule id="Q9UKJ1-1"/>
</dbReference>
<dbReference type="ProteomicsDB" id="84803">
    <molecule id="Q9UKJ1-2"/>
</dbReference>
<dbReference type="ProteomicsDB" id="84804">
    <molecule id="Q9UKJ1-3"/>
</dbReference>
<dbReference type="ProteomicsDB" id="84805">
    <molecule id="Q9UKJ1-4"/>
</dbReference>
<dbReference type="Antibodypedia" id="30692">
    <property type="antibodies" value="178 antibodies from 26 providers"/>
</dbReference>
<dbReference type="DNASU" id="29992"/>
<dbReference type="Ensembl" id="ENST00000198536.7">
    <molecule id="Q9UKJ1-1"/>
    <property type="protein sequence ID" value="ENSP00000198536.2"/>
    <property type="gene ID" value="ENSG00000085514.16"/>
</dbReference>
<dbReference type="Ensembl" id="ENST00000350573.2">
    <molecule id="Q9UKJ1-3"/>
    <property type="protein sequence ID" value="ENSP00000340109.2"/>
    <property type="gene ID" value="ENSG00000085514.16"/>
</dbReference>
<dbReference type="Ensembl" id="ENST00000394000.6">
    <molecule id="Q9UKJ1-4"/>
    <property type="protein sequence ID" value="ENSP00000377569.2"/>
    <property type="gene ID" value="ENSG00000085514.16"/>
</dbReference>
<dbReference type="GeneID" id="29992"/>
<dbReference type="KEGG" id="hsa:29992"/>
<dbReference type="MANE-Select" id="ENST00000198536.7">
    <property type="protein sequence ID" value="ENSP00000198536.2"/>
    <property type="RefSeq nucleotide sequence ID" value="NM_013439.3"/>
    <property type="RefSeq protein sequence ID" value="NP_038467.2"/>
</dbReference>
<dbReference type="UCSC" id="uc003uuo.1">
    <molecule id="Q9UKJ1-1"/>
    <property type="organism name" value="human"/>
</dbReference>
<dbReference type="AGR" id="HGNC:20396"/>
<dbReference type="CTD" id="29992"/>
<dbReference type="DisGeNET" id="29992"/>
<dbReference type="GeneCards" id="PILRA"/>
<dbReference type="HGNC" id="HGNC:20396">
    <property type="gene designation" value="PILRA"/>
</dbReference>
<dbReference type="HPA" id="ENSG00000085514">
    <property type="expression patterns" value="Low tissue specificity"/>
</dbReference>
<dbReference type="MIM" id="605341">
    <property type="type" value="gene"/>
</dbReference>
<dbReference type="neXtProt" id="NX_Q9UKJ1"/>
<dbReference type="OpenTargets" id="ENSG00000085514"/>
<dbReference type="PharmGKB" id="PA134873007"/>
<dbReference type="VEuPathDB" id="HostDB:ENSG00000085514"/>
<dbReference type="eggNOG" id="ENOG502SUHR">
    <property type="taxonomic scope" value="Eukaryota"/>
</dbReference>
<dbReference type="GeneTree" id="ENSGT00940000163799"/>
<dbReference type="HOGENOM" id="CLU_070832_0_0_1"/>
<dbReference type="InParanoid" id="Q9UKJ1"/>
<dbReference type="OMA" id="PHSDSWH"/>
<dbReference type="PAN-GO" id="Q9UKJ1">
    <property type="GO annotations" value="1 GO annotation based on evolutionary models"/>
</dbReference>
<dbReference type="PhylomeDB" id="Q9UKJ1"/>
<dbReference type="TreeFam" id="TF338478"/>
<dbReference type="PathwayCommons" id="Q9UKJ1"/>
<dbReference type="Reactome" id="R-HSA-198933">
    <property type="pathway name" value="Immunoregulatory interactions between a Lymphoid and a non-Lymphoid cell"/>
</dbReference>
<dbReference type="SignaLink" id="Q9UKJ1"/>
<dbReference type="BioGRID-ORCS" id="29992">
    <property type="hits" value="25 hits in 1140 CRISPR screens"/>
</dbReference>
<dbReference type="ChiTaRS" id="PILRA">
    <property type="organism name" value="human"/>
</dbReference>
<dbReference type="EvolutionaryTrace" id="Q9UKJ1"/>
<dbReference type="GenomeRNAi" id="29992"/>
<dbReference type="Pharos" id="Q9UKJ1">
    <property type="development level" value="Tbio"/>
</dbReference>
<dbReference type="PRO" id="PR:Q9UKJ1"/>
<dbReference type="Proteomes" id="UP000005640">
    <property type="component" value="Chromosome 7"/>
</dbReference>
<dbReference type="RNAct" id="Q9UKJ1">
    <property type="molecule type" value="protein"/>
</dbReference>
<dbReference type="Bgee" id="ENSG00000085514">
    <property type="expression patterns" value="Expressed in monocyte and 142 other cell types or tissues"/>
</dbReference>
<dbReference type="ExpressionAtlas" id="Q9UKJ1">
    <property type="expression patterns" value="baseline and differential"/>
</dbReference>
<dbReference type="GO" id="GO:0070062">
    <property type="term" value="C:extracellular exosome"/>
    <property type="evidence" value="ECO:0007005"/>
    <property type="project" value="UniProtKB"/>
</dbReference>
<dbReference type="GO" id="GO:0005886">
    <property type="term" value="C:plasma membrane"/>
    <property type="evidence" value="ECO:0000304"/>
    <property type="project" value="Reactome"/>
</dbReference>
<dbReference type="GO" id="GO:0042288">
    <property type="term" value="F:MHC class I protein binding"/>
    <property type="evidence" value="ECO:0000318"/>
    <property type="project" value="GO_Central"/>
</dbReference>
<dbReference type="GO" id="GO:0007165">
    <property type="term" value="P:signal transduction"/>
    <property type="evidence" value="ECO:0000314"/>
    <property type="project" value="MGI"/>
</dbReference>
<dbReference type="FunFam" id="2.60.40.10:FF:000753">
    <property type="entry name" value="Paired immunoglobulin-like type 2 receptor alpha"/>
    <property type="match status" value="1"/>
</dbReference>
<dbReference type="Gene3D" id="2.60.40.10">
    <property type="entry name" value="Immunoglobulins"/>
    <property type="match status" value="1"/>
</dbReference>
<dbReference type="InterPro" id="IPR007110">
    <property type="entry name" value="Ig-like_dom"/>
</dbReference>
<dbReference type="InterPro" id="IPR036179">
    <property type="entry name" value="Ig-like_dom_sf"/>
</dbReference>
<dbReference type="InterPro" id="IPR013783">
    <property type="entry name" value="Ig-like_fold"/>
</dbReference>
<dbReference type="InterPro" id="IPR003599">
    <property type="entry name" value="Ig_sub"/>
</dbReference>
<dbReference type="InterPro" id="IPR013106">
    <property type="entry name" value="Ig_V-set"/>
</dbReference>
<dbReference type="InterPro" id="IPR051694">
    <property type="entry name" value="Immunoregulatory_rcpt-like"/>
</dbReference>
<dbReference type="PANTHER" id="PTHR15549">
    <property type="entry name" value="PAIRED IMMUNOGLOBULIN-LIKE TYPE 2 RECEPTOR"/>
    <property type="match status" value="1"/>
</dbReference>
<dbReference type="PANTHER" id="PTHR15549:SF1">
    <property type="entry name" value="PAIRED IMMUNOGLOBULIN-LIKE TYPE 2 RECEPTOR ALPHA"/>
    <property type="match status" value="1"/>
</dbReference>
<dbReference type="Pfam" id="PF07686">
    <property type="entry name" value="V-set"/>
    <property type="match status" value="1"/>
</dbReference>
<dbReference type="SMART" id="SM00409">
    <property type="entry name" value="IG"/>
    <property type="match status" value="1"/>
</dbReference>
<dbReference type="SUPFAM" id="SSF48726">
    <property type="entry name" value="Immunoglobulin"/>
    <property type="match status" value="1"/>
</dbReference>
<dbReference type="PROSITE" id="PS50835">
    <property type="entry name" value="IG_LIKE"/>
    <property type="match status" value="1"/>
</dbReference>
<keyword id="KW-0002">3D-structure</keyword>
<keyword id="KW-0025">Alternative splicing</keyword>
<keyword id="KW-1003">Cell membrane</keyword>
<keyword id="KW-0325">Glycoprotein</keyword>
<keyword id="KW-0945">Host-virus interaction</keyword>
<keyword id="KW-0393">Immunoglobulin domain</keyword>
<keyword id="KW-0472">Membrane</keyword>
<keyword id="KW-0597">Phosphoprotein</keyword>
<keyword id="KW-1267">Proteomics identification</keyword>
<keyword id="KW-0675">Receptor</keyword>
<keyword id="KW-1185">Reference proteome</keyword>
<keyword id="KW-0964">Secreted</keyword>
<keyword id="KW-0732">Signal</keyword>
<keyword id="KW-0812">Transmembrane</keyword>
<keyword id="KW-1133">Transmembrane helix</keyword>
<sequence>MGRPLLLPLLPLLLPPAFLQPSGSTGSGPSYLYGVTQPKHLSASMGGSVEIPFSFYYPWELATAPDVRISWRRGHFHRQSFYSTRPPSIHKDYVNRLFLNWTEGQKSGFLRISNLQKQDQSVYFCRVELDTRSSGRQQWQSIEGTKLSITQAVTTTTQRPSSMTTTWRLSSTTTTTGLRVTQGKRRSDSWHISLETAVGVAVAVTVLGIMILGLICLLRWRRRKGQQRTKATTPAREPFQNTEEPYENIRNEGQNTDPKLNPKDDGIVYASLALSSSTSPRAPPSHRPLKSPQNETLYSVLKA</sequence>
<name>PILRA_HUMAN</name>
<reference key="1">
    <citation type="journal article" date="2000" name="J. Biol. Chem.">
        <title>PILRalpha, a novel immunoreceptor tyrosine-based inhibitory motif-bearing protein, recruits SHP-1 upon tyrosine phosphorylation and is paired with the truncated counterpart PILRbeta.</title>
        <authorList>
            <person name="Mousseau D.D."/>
            <person name="Banville D."/>
            <person name="L'Abbe D."/>
            <person name="Bouchard P."/>
            <person name="Shen S.H."/>
        </authorList>
    </citation>
    <scope>NUCLEOTIDE SEQUENCE [MRNA] (ISOFORM 1)</scope>
    <scope>INTERACTION WITH PTPN6</scope>
    <scope>GLYCOSYLATION</scope>
    <scope>PHOSPHORYLATION</scope>
    <scope>MUTAGENESIS OF TYR-269</scope>
    <scope>VARIANT GLY-78</scope>
</reference>
<reference key="2">
    <citation type="journal article" date="2000" name="J. Immunol.">
        <title>FDF03, a novel inhibitory receptor of the immunoglobulin superfamily, is expressed by human dendritic and myeloid cells.</title>
        <authorList>
            <person name="Fournier N."/>
            <person name="Chalus L."/>
            <person name="Durand I."/>
            <person name="Garcia E."/>
            <person name="Pin J.J."/>
            <person name="Churakova T."/>
            <person name="Patel S."/>
            <person name="Zlot C."/>
            <person name="Gorman D."/>
            <person name="Zurawski S."/>
            <person name="Abrams J."/>
            <person name="Bates E.E."/>
            <person name="Garrone P."/>
        </authorList>
    </citation>
    <scope>NUCLEOTIDE SEQUENCE [MRNA] (ISOFORMS 1; 3 AND 4)</scope>
    <scope>FUNCTION</scope>
    <scope>TISSUE SPECIFICITY</scope>
    <scope>INTERACTION WITH PTPN6 AND PTPN11</scope>
    <scope>GLYCOSYLATION</scope>
    <scope>PHOSPHORYLATION</scope>
    <scope>VARIANT GLY-78</scope>
</reference>
<reference key="3">
    <citation type="journal article" date="2003" name="Nature">
        <title>The DNA sequence of human chromosome 7.</title>
        <authorList>
            <person name="Hillier L.W."/>
            <person name="Fulton R.S."/>
            <person name="Fulton L.A."/>
            <person name="Graves T.A."/>
            <person name="Pepin K.H."/>
            <person name="Wagner-McPherson C."/>
            <person name="Layman D."/>
            <person name="Maas J."/>
            <person name="Jaeger S."/>
            <person name="Walker R."/>
            <person name="Wylie K."/>
            <person name="Sekhon M."/>
            <person name="Becker M.C."/>
            <person name="O'Laughlin M.D."/>
            <person name="Schaller M.E."/>
            <person name="Fewell G.A."/>
            <person name="Delehaunty K.D."/>
            <person name="Miner T.L."/>
            <person name="Nash W.E."/>
            <person name="Cordes M."/>
            <person name="Du H."/>
            <person name="Sun H."/>
            <person name="Edwards J."/>
            <person name="Bradshaw-Cordum H."/>
            <person name="Ali J."/>
            <person name="Andrews S."/>
            <person name="Isak A."/>
            <person name="Vanbrunt A."/>
            <person name="Nguyen C."/>
            <person name="Du F."/>
            <person name="Lamar B."/>
            <person name="Courtney L."/>
            <person name="Kalicki J."/>
            <person name="Ozersky P."/>
            <person name="Bielicki L."/>
            <person name="Scott K."/>
            <person name="Holmes A."/>
            <person name="Harkins R."/>
            <person name="Harris A."/>
            <person name="Strong C.M."/>
            <person name="Hou S."/>
            <person name="Tomlinson C."/>
            <person name="Dauphin-Kohlberg S."/>
            <person name="Kozlowicz-Reilly A."/>
            <person name="Leonard S."/>
            <person name="Rohlfing T."/>
            <person name="Rock S.M."/>
            <person name="Tin-Wollam A.-M."/>
            <person name="Abbott A."/>
            <person name="Minx P."/>
            <person name="Maupin R."/>
            <person name="Strowmatt C."/>
            <person name="Latreille P."/>
            <person name="Miller N."/>
            <person name="Johnson D."/>
            <person name="Murray J."/>
            <person name="Woessner J.P."/>
            <person name="Wendl M.C."/>
            <person name="Yang S.-P."/>
            <person name="Schultz B.R."/>
            <person name="Wallis J.W."/>
            <person name="Spieth J."/>
            <person name="Bieri T.A."/>
            <person name="Nelson J.O."/>
            <person name="Berkowicz N."/>
            <person name="Wohldmann P.E."/>
            <person name="Cook L.L."/>
            <person name="Hickenbotham M.T."/>
            <person name="Eldred J."/>
            <person name="Williams D."/>
            <person name="Bedell J.A."/>
            <person name="Mardis E.R."/>
            <person name="Clifton S.W."/>
            <person name="Chissoe S.L."/>
            <person name="Marra M.A."/>
            <person name="Raymond C."/>
            <person name="Haugen E."/>
            <person name="Gillett W."/>
            <person name="Zhou Y."/>
            <person name="James R."/>
            <person name="Phelps K."/>
            <person name="Iadanoto S."/>
            <person name="Bubb K."/>
            <person name="Simms E."/>
            <person name="Levy R."/>
            <person name="Clendenning J."/>
            <person name="Kaul R."/>
            <person name="Kent W.J."/>
            <person name="Furey T.S."/>
            <person name="Baertsch R.A."/>
            <person name="Brent M.R."/>
            <person name="Keibler E."/>
            <person name="Flicek P."/>
            <person name="Bork P."/>
            <person name="Suyama M."/>
            <person name="Bailey J.A."/>
            <person name="Portnoy M.E."/>
            <person name="Torrents D."/>
            <person name="Chinwalla A.T."/>
            <person name="Gish W.R."/>
            <person name="Eddy S.R."/>
            <person name="McPherson J.D."/>
            <person name="Olson M.V."/>
            <person name="Eichler E.E."/>
            <person name="Green E.D."/>
            <person name="Waterston R.H."/>
            <person name="Wilson R.K."/>
        </authorList>
    </citation>
    <scope>NUCLEOTIDE SEQUENCE [LARGE SCALE GENOMIC DNA]</scope>
</reference>
<reference key="4">
    <citation type="journal article" date="2004" name="Genome Res.">
        <title>The status, quality, and expansion of the NIH full-length cDNA project: the Mammalian Gene Collection (MGC).</title>
        <authorList>
            <consortium name="The MGC Project Team"/>
        </authorList>
    </citation>
    <scope>NUCLEOTIDE SEQUENCE [LARGE SCALE MRNA] (ISOFORM 2)</scope>
    <scope>VARIANT GLY-78</scope>
    <source>
        <tissue>Lung</tissue>
    </source>
</reference>
<reference key="5">
    <citation type="journal article" date="2008" name="Cell">
        <title>PILRalpha is a herpes simplex virus-1 entry coreceptor that associates with glycoprotein B.</title>
        <authorList>
            <person name="Satoh T."/>
            <person name="Arii J."/>
            <person name="Suenaga T."/>
            <person name="Wang J."/>
            <person name="Kogure A."/>
            <person name="Uehori J."/>
            <person name="Arase N."/>
            <person name="Shiratori I."/>
            <person name="Tanaka S."/>
            <person name="Kawaguchi Y."/>
            <person name="Spear P.G."/>
            <person name="Lanier L.L."/>
            <person name="Arase H."/>
        </authorList>
    </citation>
    <scope>INTERACTION WITH HERPES SIMPLEX VIRUS 1 GLYCOPROTEIN B (MICROBIAL INFECTION)</scope>
    <scope>FUNCTION AS A CORECEPTOR FOR THE VIRUS (MICROBIAL INFECTION)</scope>
</reference>
<reference key="6">
    <citation type="journal article" date="2009" name="J. Proteome Res.">
        <title>Glycoproteomics analysis of human liver tissue by combination of multiple enzyme digestion and hydrazide chemistry.</title>
        <authorList>
            <person name="Chen R."/>
            <person name="Jiang X."/>
            <person name="Sun D."/>
            <person name="Han G."/>
            <person name="Wang F."/>
            <person name="Ye M."/>
            <person name="Wang L."/>
            <person name="Zou H."/>
        </authorList>
    </citation>
    <scope>GLYCOSYLATION [LARGE SCALE ANALYSIS] AT ASN-100</scope>
    <source>
        <tissue>Liver</tissue>
    </source>
</reference>
<reference key="7">
    <citation type="journal article" date="2011" name="Biochem. Biophys. Res. Commun.">
        <title>PANP is a novel O-glycosylated PILRalpha ligand expressed in neural tissues.</title>
        <authorList>
            <person name="Kogure A."/>
            <person name="Shiratori I."/>
            <person name="Wang J."/>
            <person name="Lanier L.L."/>
            <person name="Arase H."/>
        </authorList>
    </citation>
    <scope>FUNCTION</scope>
</reference>